<sequence>MTLNQLLQKLEATSPILQANFGIERESLRVDRQGQLVHTPHPSCLGARSFHPYIQTDFCEFQMELITPVAKSTTEARRFLGAITDVAGRSIATDEVLWPLSMPPRLKAEEIQVAQLENDFERHYRNYLAEKYGTKLQAISGIHYNMELGKDLVEALFQESDQTDMIAFKNALYLKLAQNYLRYRWVITYLFGASPIAEQGFFDQEVPEPMRSFRNSDHGYVNKEEIQVSFVSLEDYVSAIETYIEQGDLIAEKEFYSAVRFRGQKVNRSFLDKGITYLEFRNFDLNPFERIGISQTTMDTVHLLILAFLWLDSPENVDQALAQGHALNEKIALSHPLEPLPSEAKTQDIVTALDQLVQHFGLGDYHQDLVKQVKAAFADPNQTLSAQLLPYIKDKSLAEFALNKALAYHDYDWTAHYALKGYEEMELSTQMLLFDAIQKGIHFEILDEQDQFLKLWHQDHVEYVKNGNMTSKDNYVVPLAMANKTVTKKILADAGFPVPSGDEFTSLEEGLAYYPLIKDKQIVVKPKSTNFGLGISIFQEPASLDNYQKALEIAFAEDTSVLVEEFIPGTEYRFFILDGRCEAVLLRVAANVIGDGKHTIRELVAQKNANPLRGRDHRSPLEIIELGDIEQLMLAQQGYTPDDILPEGKKVNLRRNSNISTGGDSIDVTETMDSSYQELAAAMATSMGAWACGVDLIIPDETQIATKENPHCTCIELNFNPSMYMHTYCAEGPGQAITTKILDKLFPEIVAGQT</sequence>
<reference key="1">
    <citation type="journal article" date="2004" name="Nat. Biotechnol.">
        <title>Complete sequence and comparative genome analysis of the dairy bacterium Streptococcus thermophilus.</title>
        <authorList>
            <person name="Bolotin A."/>
            <person name="Quinquis B."/>
            <person name="Renault P."/>
            <person name="Sorokin A."/>
            <person name="Ehrlich S.D."/>
            <person name="Kulakauskas S."/>
            <person name="Lapidus A."/>
            <person name="Goltsman E."/>
            <person name="Mazur M."/>
            <person name="Pusch G.D."/>
            <person name="Fonstein M."/>
            <person name="Overbeek R."/>
            <person name="Kyprides N."/>
            <person name="Purnelle B."/>
            <person name="Prozzi D."/>
            <person name="Ngui K."/>
            <person name="Masuy D."/>
            <person name="Hancy F."/>
            <person name="Burteau S."/>
            <person name="Boutry M."/>
            <person name="Delcour J."/>
            <person name="Goffeau A."/>
            <person name="Hols P."/>
        </authorList>
    </citation>
    <scope>NUCLEOTIDE SEQUENCE [LARGE SCALE GENOMIC DNA]</scope>
    <source>
        <strain>CNRZ 1066</strain>
    </source>
</reference>
<proteinExistence type="inferred from homology"/>
<name>GSHAB_STRT1</name>
<evidence type="ECO:0000250" key="1"/>
<evidence type="ECO:0000255" key="2">
    <source>
        <dbReference type="HAMAP-Rule" id="MF_00782"/>
    </source>
</evidence>
<dbReference type="EC" id="6.3.2.2" evidence="2"/>
<dbReference type="EC" id="6.3.2.3" evidence="2"/>
<dbReference type="EMBL" id="CP000024">
    <property type="protein sequence ID" value="AAV62950.1"/>
    <property type="molecule type" value="Genomic_DNA"/>
</dbReference>
<dbReference type="RefSeq" id="WP_011227399.1">
    <property type="nucleotide sequence ID" value="NC_006449.1"/>
</dbReference>
<dbReference type="SMR" id="Q5LYY5"/>
<dbReference type="GeneID" id="66899174"/>
<dbReference type="KEGG" id="stc:str1413"/>
<dbReference type="HOGENOM" id="CLU_020728_1_0_9"/>
<dbReference type="UniPathway" id="UPA00142">
    <property type="reaction ID" value="UER00209"/>
</dbReference>
<dbReference type="UniPathway" id="UPA00142">
    <property type="reaction ID" value="UER00210"/>
</dbReference>
<dbReference type="GO" id="GO:0005829">
    <property type="term" value="C:cytosol"/>
    <property type="evidence" value="ECO:0007669"/>
    <property type="project" value="TreeGrafter"/>
</dbReference>
<dbReference type="GO" id="GO:0005524">
    <property type="term" value="F:ATP binding"/>
    <property type="evidence" value="ECO:0007669"/>
    <property type="project" value="UniProtKB-UniRule"/>
</dbReference>
<dbReference type="GO" id="GO:0004357">
    <property type="term" value="F:glutamate-cysteine ligase activity"/>
    <property type="evidence" value="ECO:0007669"/>
    <property type="project" value="UniProtKB-UniRule"/>
</dbReference>
<dbReference type="GO" id="GO:0004363">
    <property type="term" value="F:glutathione synthase activity"/>
    <property type="evidence" value="ECO:0007669"/>
    <property type="project" value="UniProtKB-UniRule"/>
</dbReference>
<dbReference type="GO" id="GO:0046872">
    <property type="term" value="F:metal ion binding"/>
    <property type="evidence" value="ECO:0007669"/>
    <property type="project" value="UniProtKB-KW"/>
</dbReference>
<dbReference type="Gene3D" id="3.30.590.20">
    <property type="match status" value="1"/>
</dbReference>
<dbReference type="Gene3D" id="3.30.470.20">
    <property type="entry name" value="ATP-grasp fold, B domain"/>
    <property type="match status" value="2"/>
</dbReference>
<dbReference type="HAMAP" id="MF_00782">
    <property type="entry name" value="Glut_biosynth"/>
    <property type="match status" value="1"/>
</dbReference>
<dbReference type="InterPro" id="IPR011761">
    <property type="entry name" value="ATP-grasp"/>
</dbReference>
<dbReference type="InterPro" id="IPR014746">
    <property type="entry name" value="Gln_synth/guanido_kin_cat_dom"/>
</dbReference>
<dbReference type="InterPro" id="IPR007370">
    <property type="entry name" value="Glu_cys_ligase"/>
</dbReference>
<dbReference type="InterPro" id="IPR006335">
    <property type="entry name" value="Glut_biosynth"/>
</dbReference>
<dbReference type="InterPro" id="IPR006334">
    <property type="entry name" value="Glut_cys_ligase"/>
</dbReference>
<dbReference type="InterPro" id="IPR040657">
    <property type="entry name" value="GshAB_ATP-grasp"/>
</dbReference>
<dbReference type="NCBIfam" id="TIGR01435">
    <property type="entry name" value="glu_cys_lig_rel"/>
    <property type="match status" value="1"/>
</dbReference>
<dbReference type="NCBIfam" id="NF002688">
    <property type="entry name" value="PRK02471.1"/>
    <property type="match status" value="1"/>
</dbReference>
<dbReference type="PANTHER" id="PTHR38761">
    <property type="entry name" value="GLUTAMATE--CYSTEINE LIGASE"/>
    <property type="match status" value="1"/>
</dbReference>
<dbReference type="PANTHER" id="PTHR38761:SF1">
    <property type="entry name" value="GLUTAMATE--CYSTEINE LIGASE"/>
    <property type="match status" value="1"/>
</dbReference>
<dbReference type="Pfam" id="PF18419">
    <property type="entry name" value="ATP-grasp_6"/>
    <property type="match status" value="1"/>
</dbReference>
<dbReference type="Pfam" id="PF04262">
    <property type="entry name" value="Glu_cys_ligase"/>
    <property type="match status" value="2"/>
</dbReference>
<dbReference type="SUPFAM" id="SSF55931">
    <property type="entry name" value="Glutamine synthetase/guanido kinase"/>
    <property type="match status" value="1"/>
</dbReference>
<dbReference type="SUPFAM" id="SSF56059">
    <property type="entry name" value="Glutathione synthetase ATP-binding domain-like"/>
    <property type="match status" value="1"/>
</dbReference>
<dbReference type="PROSITE" id="PS50975">
    <property type="entry name" value="ATP_GRASP"/>
    <property type="match status" value="1"/>
</dbReference>
<protein>
    <recommendedName>
        <fullName evidence="2">Glutathione biosynthesis bifunctional protein GshAB</fullName>
    </recommendedName>
    <alternativeName>
        <fullName evidence="2">Gamma-GCS-GS</fullName>
        <shortName evidence="2">GCS-GS</shortName>
    </alternativeName>
    <domain>
        <recommendedName>
            <fullName evidence="2">Glutamate--cysteine ligase</fullName>
            <ecNumber evidence="2">6.3.2.2</ecNumber>
        </recommendedName>
        <alternativeName>
            <fullName evidence="2">Gamma-ECS</fullName>
            <shortName evidence="2">GCS</shortName>
        </alternativeName>
        <alternativeName>
            <fullName evidence="2">Gamma-glutamylcysteine synthetase</fullName>
        </alternativeName>
    </domain>
    <domain>
        <recommendedName>
            <fullName evidence="2">Glutathione synthetase</fullName>
            <ecNumber evidence="2">6.3.2.3</ecNumber>
        </recommendedName>
        <alternativeName>
            <fullName evidence="2">GSH synthetase</fullName>
            <shortName evidence="2">GS</shortName>
            <shortName evidence="2">GSH-S</shortName>
            <shortName evidence="2">GSHase</shortName>
        </alternativeName>
        <alternativeName>
            <fullName evidence="2">Glutathione synthase</fullName>
        </alternativeName>
    </domain>
</protein>
<organism>
    <name type="scientific">Streptococcus thermophilus (strain CNRZ 1066)</name>
    <dbReference type="NCBI Taxonomy" id="299768"/>
    <lineage>
        <taxon>Bacteria</taxon>
        <taxon>Bacillati</taxon>
        <taxon>Bacillota</taxon>
        <taxon>Bacilli</taxon>
        <taxon>Lactobacillales</taxon>
        <taxon>Streptococcaceae</taxon>
        <taxon>Streptococcus</taxon>
    </lineage>
</organism>
<keyword id="KW-0067">ATP-binding</keyword>
<keyword id="KW-0317">Glutathione biosynthesis</keyword>
<keyword id="KW-0436">Ligase</keyword>
<keyword id="KW-0460">Magnesium</keyword>
<keyword id="KW-0464">Manganese</keyword>
<keyword id="KW-0479">Metal-binding</keyword>
<keyword id="KW-0511">Multifunctional enzyme</keyword>
<keyword id="KW-0547">Nucleotide-binding</keyword>
<gene>
    <name evidence="2" type="primary">gshAB</name>
    <name evidence="2" type="synonym">gshF</name>
    <name type="ordered locus">str1413</name>
</gene>
<feature type="chain" id="PRO_0000192561" description="Glutathione biosynthesis bifunctional protein GshAB">
    <location>
        <begin position="1"/>
        <end position="754"/>
    </location>
</feature>
<feature type="domain" description="ATP-grasp" evidence="2">
    <location>
        <begin position="488"/>
        <end position="746"/>
    </location>
</feature>
<feature type="region of interest" description="Glutamate--cysteine ligase">
    <location>
        <begin position="1"/>
        <end position="332"/>
    </location>
</feature>
<feature type="binding site" evidence="2">
    <location>
        <begin position="515"/>
        <end position="573"/>
    </location>
    <ligand>
        <name>ATP</name>
        <dbReference type="ChEBI" id="CHEBI:30616"/>
    </ligand>
</feature>
<feature type="binding site" evidence="2">
    <location>
        <position position="695"/>
    </location>
    <ligand>
        <name>Mg(2+)</name>
        <dbReference type="ChEBI" id="CHEBI:18420"/>
        <label>1</label>
    </ligand>
</feature>
<feature type="binding site" evidence="2">
    <location>
        <position position="695"/>
    </location>
    <ligand>
        <name>Mn(2+)</name>
        <dbReference type="ChEBI" id="CHEBI:29035"/>
        <label>1</label>
    </ligand>
</feature>
<feature type="binding site" evidence="2">
    <location>
        <position position="716"/>
    </location>
    <ligand>
        <name>Mg(2+)</name>
        <dbReference type="ChEBI" id="CHEBI:18420"/>
        <label>1</label>
    </ligand>
</feature>
<feature type="binding site" evidence="2">
    <location>
        <position position="716"/>
    </location>
    <ligand>
        <name>Mg(2+)</name>
        <dbReference type="ChEBI" id="CHEBI:18420"/>
        <label>2</label>
    </ligand>
</feature>
<feature type="binding site" evidence="2">
    <location>
        <position position="716"/>
    </location>
    <ligand>
        <name>Mn(2+)</name>
        <dbReference type="ChEBI" id="CHEBI:29035"/>
        <label>1</label>
    </ligand>
</feature>
<feature type="binding site" evidence="2">
    <location>
        <position position="716"/>
    </location>
    <ligand>
        <name>Mn(2+)</name>
        <dbReference type="ChEBI" id="CHEBI:29035"/>
        <label>2</label>
    </ligand>
</feature>
<feature type="binding site" evidence="2">
    <location>
        <position position="718"/>
    </location>
    <ligand>
        <name>Mg(2+)</name>
        <dbReference type="ChEBI" id="CHEBI:18420"/>
        <label>2</label>
    </ligand>
</feature>
<feature type="binding site" evidence="2">
    <location>
        <position position="718"/>
    </location>
    <ligand>
        <name>Mn(2+)</name>
        <dbReference type="ChEBI" id="CHEBI:29035"/>
        <label>2</label>
    </ligand>
</feature>
<accession>Q5LYY5</accession>
<comment type="function">
    <text evidence="2">Synthesizes glutathione from L-glutamate and L-cysteine via gamma-L-glutamyl-L-cysteine.</text>
</comment>
<comment type="catalytic activity">
    <reaction evidence="2">
        <text>L-cysteine + L-glutamate + ATP = gamma-L-glutamyl-L-cysteine + ADP + phosphate + H(+)</text>
        <dbReference type="Rhea" id="RHEA:13285"/>
        <dbReference type="ChEBI" id="CHEBI:15378"/>
        <dbReference type="ChEBI" id="CHEBI:29985"/>
        <dbReference type="ChEBI" id="CHEBI:30616"/>
        <dbReference type="ChEBI" id="CHEBI:35235"/>
        <dbReference type="ChEBI" id="CHEBI:43474"/>
        <dbReference type="ChEBI" id="CHEBI:58173"/>
        <dbReference type="ChEBI" id="CHEBI:456216"/>
        <dbReference type="EC" id="6.3.2.2"/>
    </reaction>
</comment>
<comment type="catalytic activity">
    <reaction evidence="2">
        <text>gamma-L-glutamyl-L-cysteine + glycine + ATP = glutathione + ADP + phosphate + H(+)</text>
        <dbReference type="Rhea" id="RHEA:13557"/>
        <dbReference type="ChEBI" id="CHEBI:15378"/>
        <dbReference type="ChEBI" id="CHEBI:30616"/>
        <dbReference type="ChEBI" id="CHEBI:43474"/>
        <dbReference type="ChEBI" id="CHEBI:57305"/>
        <dbReference type="ChEBI" id="CHEBI:57925"/>
        <dbReference type="ChEBI" id="CHEBI:58173"/>
        <dbReference type="ChEBI" id="CHEBI:456216"/>
        <dbReference type="EC" id="6.3.2.3"/>
    </reaction>
</comment>
<comment type="cofactor">
    <cofactor evidence="1">
        <name>Mg(2+)</name>
        <dbReference type="ChEBI" id="CHEBI:18420"/>
    </cofactor>
    <cofactor evidence="1">
        <name>Mn(2+)</name>
        <dbReference type="ChEBI" id="CHEBI:29035"/>
    </cofactor>
    <text evidence="1">Binds 2 magnesium or manganese ions per subunit.</text>
</comment>
<comment type="pathway">
    <text evidence="2">Sulfur metabolism; glutathione biosynthesis; glutathione from L-cysteine and L-glutamate: step 1/2.</text>
</comment>
<comment type="pathway">
    <text evidence="2">Sulfur metabolism; glutathione biosynthesis; glutathione from L-cysteine and L-glutamate: step 2/2.</text>
</comment>
<comment type="subunit">
    <text evidence="2">Monomer.</text>
</comment>
<comment type="similarity">
    <text evidence="2">In the N-terminal section; belongs to the glutamate--cysteine ligase type 1 family. Type 2 subfamily.</text>
</comment>